<dbReference type="EC" id="3.5.1.88" evidence="1"/>
<dbReference type="EMBL" id="AP008230">
    <property type="protein sequence ID" value="BAE84483.1"/>
    <property type="molecule type" value="Genomic_DNA"/>
</dbReference>
<dbReference type="RefSeq" id="WP_011460527.1">
    <property type="nucleotide sequence ID" value="NC_007907.1"/>
</dbReference>
<dbReference type="SMR" id="Q24U09"/>
<dbReference type="STRING" id="138119.DSY2694"/>
<dbReference type="KEGG" id="dsy:DSY2694"/>
<dbReference type="eggNOG" id="COG0242">
    <property type="taxonomic scope" value="Bacteria"/>
</dbReference>
<dbReference type="HOGENOM" id="CLU_061901_4_2_9"/>
<dbReference type="Proteomes" id="UP000001946">
    <property type="component" value="Chromosome"/>
</dbReference>
<dbReference type="GO" id="GO:0046872">
    <property type="term" value="F:metal ion binding"/>
    <property type="evidence" value="ECO:0007669"/>
    <property type="project" value="UniProtKB-KW"/>
</dbReference>
<dbReference type="GO" id="GO:0042586">
    <property type="term" value="F:peptide deformylase activity"/>
    <property type="evidence" value="ECO:0007669"/>
    <property type="project" value="UniProtKB-UniRule"/>
</dbReference>
<dbReference type="GO" id="GO:0043686">
    <property type="term" value="P:co-translational protein modification"/>
    <property type="evidence" value="ECO:0007669"/>
    <property type="project" value="TreeGrafter"/>
</dbReference>
<dbReference type="GO" id="GO:0006412">
    <property type="term" value="P:translation"/>
    <property type="evidence" value="ECO:0007669"/>
    <property type="project" value="UniProtKB-UniRule"/>
</dbReference>
<dbReference type="CDD" id="cd00487">
    <property type="entry name" value="Pep_deformylase"/>
    <property type="match status" value="1"/>
</dbReference>
<dbReference type="Gene3D" id="3.90.45.10">
    <property type="entry name" value="Peptide deformylase"/>
    <property type="match status" value="1"/>
</dbReference>
<dbReference type="HAMAP" id="MF_00163">
    <property type="entry name" value="Pep_deformylase"/>
    <property type="match status" value="1"/>
</dbReference>
<dbReference type="InterPro" id="IPR023635">
    <property type="entry name" value="Peptide_deformylase"/>
</dbReference>
<dbReference type="InterPro" id="IPR036821">
    <property type="entry name" value="Peptide_deformylase_sf"/>
</dbReference>
<dbReference type="NCBIfam" id="TIGR00079">
    <property type="entry name" value="pept_deformyl"/>
    <property type="match status" value="1"/>
</dbReference>
<dbReference type="NCBIfam" id="NF001159">
    <property type="entry name" value="PRK00150.1-3"/>
    <property type="match status" value="1"/>
</dbReference>
<dbReference type="PANTHER" id="PTHR10458">
    <property type="entry name" value="PEPTIDE DEFORMYLASE"/>
    <property type="match status" value="1"/>
</dbReference>
<dbReference type="PANTHER" id="PTHR10458:SF22">
    <property type="entry name" value="PEPTIDE DEFORMYLASE"/>
    <property type="match status" value="1"/>
</dbReference>
<dbReference type="Pfam" id="PF01327">
    <property type="entry name" value="Pep_deformylase"/>
    <property type="match status" value="1"/>
</dbReference>
<dbReference type="PIRSF" id="PIRSF004749">
    <property type="entry name" value="Pep_def"/>
    <property type="match status" value="1"/>
</dbReference>
<dbReference type="PRINTS" id="PR01576">
    <property type="entry name" value="PDEFORMYLASE"/>
</dbReference>
<dbReference type="SUPFAM" id="SSF56420">
    <property type="entry name" value="Peptide deformylase"/>
    <property type="match status" value="1"/>
</dbReference>
<feature type="chain" id="PRO_0000301025" description="Peptide deformylase">
    <location>
        <begin position="1"/>
        <end position="150"/>
    </location>
</feature>
<feature type="active site" evidence="1">
    <location>
        <position position="131"/>
    </location>
</feature>
<feature type="binding site" evidence="1">
    <location>
        <position position="88"/>
    </location>
    <ligand>
        <name>Fe cation</name>
        <dbReference type="ChEBI" id="CHEBI:24875"/>
    </ligand>
</feature>
<feature type="binding site" evidence="1">
    <location>
        <position position="130"/>
    </location>
    <ligand>
        <name>Fe cation</name>
        <dbReference type="ChEBI" id="CHEBI:24875"/>
    </ligand>
</feature>
<feature type="binding site" evidence="1">
    <location>
        <position position="134"/>
    </location>
    <ligand>
        <name>Fe cation</name>
        <dbReference type="ChEBI" id="CHEBI:24875"/>
    </ligand>
</feature>
<keyword id="KW-0378">Hydrolase</keyword>
<keyword id="KW-0408">Iron</keyword>
<keyword id="KW-0479">Metal-binding</keyword>
<keyword id="KW-0648">Protein biosynthesis</keyword>
<keyword id="KW-1185">Reference proteome</keyword>
<comment type="function">
    <text evidence="1">Removes the formyl group from the N-terminal Met of newly synthesized proteins. Requires at least a dipeptide for an efficient rate of reaction. N-terminal L-methionine is a prerequisite for activity but the enzyme has broad specificity at other positions.</text>
</comment>
<comment type="catalytic activity">
    <reaction evidence="1">
        <text>N-terminal N-formyl-L-methionyl-[peptide] + H2O = N-terminal L-methionyl-[peptide] + formate</text>
        <dbReference type="Rhea" id="RHEA:24420"/>
        <dbReference type="Rhea" id="RHEA-COMP:10639"/>
        <dbReference type="Rhea" id="RHEA-COMP:10640"/>
        <dbReference type="ChEBI" id="CHEBI:15377"/>
        <dbReference type="ChEBI" id="CHEBI:15740"/>
        <dbReference type="ChEBI" id="CHEBI:49298"/>
        <dbReference type="ChEBI" id="CHEBI:64731"/>
        <dbReference type="EC" id="3.5.1.88"/>
    </reaction>
</comment>
<comment type="cofactor">
    <cofactor evidence="1">
        <name>Fe(2+)</name>
        <dbReference type="ChEBI" id="CHEBI:29033"/>
    </cofactor>
    <text evidence="1">Binds 1 Fe(2+) ion.</text>
</comment>
<comment type="similarity">
    <text evidence="1">Belongs to the polypeptide deformylase family.</text>
</comment>
<protein>
    <recommendedName>
        <fullName evidence="1">Peptide deformylase</fullName>
        <shortName evidence="1">PDF</shortName>
        <ecNumber evidence="1">3.5.1.88</ecNumber>
    </recommendedName>
    <alternativeName>
        <fullName evidence="1">Polypeptide deformylase</fullName>
    </alternativeName>
</protein>
<accession>Q24U09</accession>
<gene>
    <name evidence="1" type="primary">def</name>
    <name type="ordered locus">DSY2694</name>
</gene>
<proteinExistence type="inferred from homology"/>
<organism>
    <name type="scientific">Desulfitobacterium hafniense (strain Y51)</name>
    <dbReference type="NCBI Taxonomy" id="138119"/>
    <lineage>
        <taxon>Bacteria</taxon>
        <taxon>Bacillati</taxon>
        <taxon>Bacillota</taxon>
        <taxon>Clostridia</taxon>
        <taxon>Eubacteriales</taxon>
        <taxon>Desulfitobacteriaceae</taxon>
        <taxon>Desulfitobacterium</taxon>
    </lineage>
</organism>
<name>DEF_DESHY</name>
<evidence type="ECO:0000255" key="1">
    <source>
        <dbReference type="HAMAP-Rule" id="MF_00163"/>
    </source>
</evidence>
<sequence length="150" mass="16272">MAIYQIVEIGSEVLREKAVPVKEITPNIEKLLDNMLDTLYDANGVGLAAPQVGVSKRVVVIDVGEGPIELINPVIIAKEGEDLDDEGCLSIPGITGQVARAAKVKVEALNRQGELQVIEGEGLLARCLQHEIDHLEGILFVDKAKKTQRR</sequence>
<reference key="1">
    <citation type="journal article" date="2006" name="J. Bacteriol.">
        <title>Complete genome sequence of the dehalorespiring bacterium Desulfitobacterium hafniense Y51 and comparison with Dehalococcoides ethenogenes 195.</title>
        <authorList>
            <person name="Nonaka H."/>
            <person name="Keresztes G."/>
            <person name="Shinoda Y."/>
            <person name="Ikenaga Y."/>
            <person name="Abe M."/>
            <person name="Naito K."/>
            <person name="Inatomi K."/>
            <person name="Furukawa K."/>
            <person name="Inui M."/>
            <person name="Yukawa H."/>
        </authorList>
    </citation>
    <scope>NUCLEOTIDE SEQUENCE [LARGE SCALE GENOMIC DNA]</scope>
    <source>
        <strain>Y51</strain>
    </source>
</reference>